<comment type="function">
    <text evidence="1 4 5 8">N-alpha-acetyltransferase that acetylates the N-terminus of proteins that retain their initiating methionine (By similarity). Has a broad substrate specificity: able to acetylate the initiator methionine of most peptides (By similarity). Also displays N-epsilon-acetyltransferase activity by mediating acetylation of the side chain of specific lysines on proteins. Autoacetylates (PubMed:14653991). Required for the establishment of sister chromatid cohesion and couple the processes of cohesion and DNA replication to ensure that only sister chromatids become paired together (PubMed:14653991, PubMed:18801358, PubMed:27996020). Required for the interaction between Scc1/vtd and SMC3, possibly by mediating N-terminal acetylation of Scc1/vtd (PubMed:27996020).</text>
</comment>
<comment type="function">
    <text evidence="6 7">(Microbial infection) Required for optimal replication of E.chaffeensis in the immune tissues, hemocytes, and fat body.</text>
</comment>
<comment type="catalytic activity">
    <reaction evidence="1">
        <text>N-terminal L-methionyl-L-alanyl-[protein] + acetyl-CoA = N-terminal N(alpha)-acetyl-L-methionyl-L-alanyl-[protein] + CoA + H(+)</text>
        <dbReference type="Rhea" id="RHEA:50564"/>
        <dbReference type="Rhea" id="RHEA-COMP:12726"/>
        <dbReference type="Rhea" id="RHEA-COMP:12727"/>
        <dbReference type="ChEBI" id="CHEBI:15378"/>
        <dbReference type="ChEBI" id="CHEBI:57287"/>
        <dbReference type="ChEBI" id="CHEBI:57288"/>
        <dbReference type="ChEBI" id="CHEBI:133398"/>
        <dbReference type="ChEBI" id="CHEBI:133399"/>
        <dbReference type="EC" id="2.3.1.258"/>
    </reaction>
</comment>
<comment type="catalytic activity">
    <reaction evidence="1">
        <text>N-terminal L-methionyl-L-seryl-[protein] + acetyl-CoA = N-terminal N(alpha)-acetyl-L-methionyl-L-seryl-[protein] + CoA + H(+)</text>
        <dbReference type="Rhea" id="RHEA:50568"/>
        <dbReference type="Rhea" id="RHEA-COMP:12728"/>
        <dbReference type="Rhea" id="RHEA-COMP:12729"/>
        <dbReference type="ChEBI" id="CHEBI:15378"/>
        <dbReference type="ChEBI" id="CHEBI:57287"/>
        <dbReference type="ChEBI" id="CHEBI:57288"/>
        <dbReference type="ChEBI" id="CHEBI:133400"/>
        <dbReference type="ChEBI" id="CHEBI:133401"/>
        <dbReference type="EC" id="2.3.1.258"/>
    </reaction>
</comment>
<comment type="catalytic activity">
    <reaction evidence="1">
        <text>N-terminal L-methionyl-L-valyl-[protein] + acetyl-CoA = N-terminal N(alpha)-acetyl-L-methionyl-L-valyl-[protein] + CoA + H(+)</text>
        <dbReference type="Rhea" id="RHEA:50572"/>
        <dbReference type="Rhea" id="RHEA-COMP:12730"/>
        <dbReference type="Rhea" id="RHEA-COMP:12731"/>
        <dbReference type="ChEBI" id="CHEBI:15378"/>
        <dbReference type="ChEBI" id="CHEBI:57287"/>
        <dbReference type="ChEBI" id="CHEBI:57288"/>
        <dbReference type="ChEBI" id="CHEBI:133402"/>
        <dbReference type="ChEBI" id="CHEBI:133403"/>
        <dbReference type="EC" id="2.3.1.258"/>
    </reaction>
</comment>
<comment type="catalytic activity">
    <reaction evidence="1">
        <text>N-terminal L-methionyl-L-threonyl-[protein] + acetyl-CoA = N-terminal N(alpha)-acetyl-L-methionyl-L-threonyl-[protein] + CoA + H(+)</text>
        <dbReference type="Rhea" id="RHEA:50576"/>
        <dbReference type="Rhea" id="RHEA-COMP:12732"/>
        <dbReference type="Rhea" id="RHEA-COMP:12733"/>
        <dbReference type="ChEBI" id="CHEBI:15378"/>
        <dbReference type="ChEBI" id="CHEBI:57287"/>
        <dbReference type="ChEBI" id="CHEBI:57288"/>
        <dbReference type="ChEBI" id="CHEBI:133404"/>
        <dbReference type="ChEBI" id="CHEBI:133405"/>
        <dbReference type="EC" id="2.3.1.258"/>
    </reaction>
</comment>
<comment type="catalytic activity">
    <reaction evidence="1">
        <text>N-terminal L-methionyl-L-lysyl-[protein] + acetyl-CoA = N-terminal N(alpha)-acetyl-L-methionyl-L-lysyl-[protein] + CoA + H(+)</text>
        <dbReference type="Rhea" id="RHEA:50580"/>
        <dbReference type="Rhea" id="RHEA-COMP:12734"/>
        <dbReference type="Rhea" id="RHEA-COMP:12735"/>
        <dbReference type="ChEBI" id="CHEBI:15378"/>
        <dbReference type="ChEBI" id="CHEBI:57287"/>
        <dbReference type="ChEBI" id="CHEBI:57288"/>
        <dbReference type="ChEBI" id="CHEBI:133406"/>
        <dbReference type="ChEBI" id="CHEBI:133407"/>
        <dbReference type="EC" id="2.3.1.258"/>
    </reaction>
</comment>
<comment type="catalytic activity">
    <reaction evidence="1">
        <text>N-terminal L-methionyl-L-leucyl-[protein] + acetyl-CoA = N-terminal N(alpha)-acetyl-L-methionyl-L-leucyl-[protein] + CoA + H(+)</text>
        <dbReference type="Rhea" id="RHEA:50520"/>
        <dbReference type="Rhea" id="RHEA-COMP:12711"/>
        <dbReference type="Rhea" id="RHEA-COMP:12712"/>
        <dbReference type="ChEBI" id="CHEBI:15378"/>
        <dbReference type="ChEBI" id="CHEBI:57287"/>
        <dbReference type="ChEBI" id="CHEBI:57288"/>
        <dbReference type="ChEBI" id="CHEBI:133377"/>
        <dbReference type="ChEBI" id="CHEBI:133378"/>
        <dbReference type="EC" id="2.3.1.258"/>
    </reaction>
</comment>
<comment type="catalytic activity">
    <reaction evidence="1">
        <text>N-terminal L-methionyl-L-phenylalanyl-[protein] + acetyl-CoA = N-terminal N(alpha)-acetyl-L-methionyl-L-phenylalanyl-[protein] + CoA + H(+)</text>
        <dbReference type="Rhea" id="RHEA:50528"/>
        <dbReference type="Rhea" id="RHEA-COMP:12715"/>
        <dbReference type="Rhea" id="RHEA-COMP:12716"/>
        <dbReference type="ChEBI" id="CHEBI:15378"/>
        <dbReference type="ChEBI" id="CHEBI:57287"/>
        <dbReference type="ChEBI" id="CHEBI:57288"/>
        <dbReference type="ChEBI" id="CHEBI:133382"/>
        <dbReference type="ChEBI" id="CHEBI:133383"/>
        <dbReference type="EC" id="2.3.1.258"/>
    </reaction>
</comment>
<comment type="catalytic activity">
    <reaction evidence="1">
        <text>N-terminal L-methionyl-L-tyrosyl-[protein] + acetyl-CoA = N-terminal N(alpha)-acetyl-L-methionyl-L-tyrosyl-[protein] + CoA + H(+)</text>
        <dbReference type="Rhea" id="RHEA:50532"/>
        <dbReference type="Rhea" id="RHEA-COMP:12717"/>
        <dbReference type="Rhea" id="RHEA-COMP:12718"/>
        <dbReference type="ChEBI" id="CHEBI:15378"/>
        <dbReference type="ChEBI" id="CHEBI:57287"/>
        <dbReference type="ChEBI" id="CHEBI:57288"/>
        <dbReference type="ChEBI" id="CHEBI:133384"/>
        <dbReference type="ChEBI" id="CHEBI:133385"/>
        <dbReference type="EC" id="2.3.1.258"/>
    </reaction>
</comment>
<comment type="subunit">
    <text evidence="4">Component of an acetyltransferase complex, at least composed of san, Ard1 and Nat1.</text>
</comment>
<comment type="subcellular location">
    <subcellularLocation>
        <location evidence="4">Cytoplasm</location>
    </subcellularLocation>
    <text evidence="4">During interphase, it localizes to the cytoplasm. During the entry into mitosis, it becomes distributed throughout the entire cell in a punctate pattern. From metaphase through telophase, it is distributed uniformly throughout the cell.</text>
</comment>
<comment type="PTM">
    <text evidence="12">Autoacetylated.</text>
</comment>
<comment type="disruption phenotype">
    <text evidence="4 5">Flies display disrupt centromeric sister chromatid cohesion very early in division (PubMed:14653991, PubMed:18801358). This failure of sister chromatid cohesion does not require separase and is correlated with a failure of the cohesin component Scc1 to accumulate in centromeric regions (PubMed:14653991). In contrast, no mitotic defects are observed in germ line cells during oogenesis (PubMed:18801358).</text>
</comment>
<comment type="disruption phenotype">
    <text evidence="6 7">(Microbial infection) After infection with E.chaffeensis, results in reduced bacterial replication rate and increased survival (PubMed:22851751). RNAi-mediated knockdown in the whole organism, in the fat body or hemocytes results in a similar phenotype to the genetic knockout (PubMed:23306065). However, knockdown in the eye, salivary gland or wing has no effect (PubMed:23306065).</text>
</comment>
<comment type="similarity">
    <text evidence="11">Belongs to the acetyltransferase family.</text>
</comment>
<dbReference type="EC" id="2.3.1.258" evidence="1"/>
<dbReference type="EC" id="2.3.1.-" evidence="12"/>
<dbReference type="EMBL" id="AF225902">
    <property type="protein sequence ID" value="AAF34715.1"/>
    <property type="molecule type" value="mRNA"/>
</dbReference>
<dbReference type="EMBL" id="AE013599">
    <property type="protein sequence ID" value="AAG22284.1"/>
    <property type="molecule type" value="Genomic_DNA"/>
</dbReference>
<dbReference type="EMBL" id="AY070826">
    <property type="protein sequence ID" value="AAL48448.1"/>
    <property type="molecule type" value="mRNA"/>
</dbReference>
<dbReference type="RefSeq" id="NP_524779.1">
    <property type="nucleotide sequence ID" value="NM_080040.5"/>
</dbReference>
<dbReference type="SMR" id="Q9NHD5"/>
<dbReference type="BioGRID" id="69228">
    <property type="interactions" value="9"/>
</dbReference>
<dbReference type="FunCoup" id="Q9NHD5">
    <property type="interactions" value="1884"/>
</dbReference>
<dbReference type="IntAct" id="Q9NHD5">
    <property type="interactions" value="7"/>
</dbReference>
<dbReference type="STRING" id="7227.FBpp0087227"/>
<dbReference type="iPTMnet" id="Q9NHD5"/>
<dbReference type="PaxDb" id="7227-FBpp0087227"/>
<dbReference type="DNASU" id="44724"/>
<dbReference type="EnsemblMetazoa" id="FBtr0088126">
    <property type="protein sequence ID" value="FBpp0087227"/>
    <property type="gene ID" value="FBgn0024188"/>
</dbReference>
<dbReference type="GeneID" id="44724"/>
<dbReference type="KEGG" id="dme:Dmel_CG12352"/>
<dbReference type="AGR" id="FB:FBgn0024188"/>
<dbReference type="CTD" id="44724"/>
<dbReference type="FlyBase" id="FBgn0024188">
    <property type="gene designation" value="san"/>
</dbReference>
<dbReference type="VEuPathDB" id="VectorBase:FBgn0024188"/>
<dbReference type="eggNOG" id="KOG3138">
    <property type="taxonomic scope" value="Eukaryota"/>
</dbReference>
<dbReference type="GeneTree" id="ENSGT00390000009110"/>
<dbReference type="HOGENOM" id="CLU_013985_5_3_1"/>
<dbReference type="InParanoid" id="Q9NHD5"/>
<dbReference type="OMA" id="ICCRLET"/>
<dbReference type="OrthoDB" id="47374at2759"/>
<dbReference type="PhylomeDB" id="Q9NHD5"/>
<dbReference type="BioGRID-ORCS" id="44724">
    <property type="hits" value="1 hit in 1 CRISPR screen"/>
</dbReference>
<dbReference type="GenomeRNAi" id="44724"/>
<dbReference type="PRO" id="PR:Q9NHD5"/>
<dbReference type="Proteomes" id="UP000000803">
    <property type="component" value="Chromosome 2R"/>
</dbReference>
<dbReference type="Bgee" id="FBgn0024188">
    <property type="expression patterns" value="Expressed in ovary and 118 other cell types or tissues"/>
</dbReference>
<dbReference type="GO" id="GO:0005737">
    <property type="term" value="C:cytoplasm"/>
    <property type="evidence" value="ECO:0000314"/>
    <property type="project" value="UniProtKB"/>
</dbReference>
<dbReference type="GO" id="GO:0005829">
    <property type="term" value="C:cytosol"/>
    <property type="evidence" value="ECO:0000314"/>
    <property type="project" value="FlyBase"/>
</dbReference>
<dbReference type="GO" id="GO:0031415">
    <property type="term" value="C:NatA complex"/>
    <property type="evidence" value="ECO:0000314"/>
    <property type="project" value="FlyBase"/>
</dbReference>
<dbReference type="GO" id="GO:0031248">
    <property type="term" value="C:protein acetyltransferase complex"/>
    <property type="evidence" value="ECO:0000353"/>
    <property type="project" value="UniProtKB"/>
</dbReference>
<dbReference type="GO" id="GO:0008080">
    <property type="term" value="F:N-acetyltransferase activity"/>
    <property type="evidence" value="ECO:0000250"/>
    <property type="project" value="UniProtKB"/>
</dbReference>
<dbReference type="GO" id="GO:0120518">
    <property type="term" value="F:protein N-terminal-methionine acetyltransferase activity"/>
    <property type="evidence" value="ECO:0007669"/>
    <property type="project" value="UniProtKB-EC"/>
</dbReference>
<dbReference type="GO" id="GO:0004596">
    <property type="term" value="F:protein-N-terminal amino-acid acetyltransferase activity"/>
    <property type="evidence" value="ECO:0000314"/>
    <property type="project" value="UniProtKB"/>
</dbReference>
<dbReference type="GO" id="GO:0000278">
    <property type="term" value="P:mitotic cell cycle"/>
    <property type="evidence" value="ECO:0000315"/>
    <property type="project" value="FlyBase"/>
</dbReference>
<dbReference type="GO" id="GO:0007064">
    <property type="term" value="P:mitotic sister chromatid cohesion"/>
    <property type="evidence" value="ECO:0000315"/>
    <property type="project" value="UniProtKB"/>
</dbReference>
<dbReference type="GO" id="GO:0006474">
    <property type="term" value="P:N-terminal protein amino acid acetylation"/>
    <property type="evidence" value="ECO:0000314"/>
    <property type="project" value="UniProtKB"/>
</dbReference>
<dbReference type="CDD" id="cd04301">
    <property type="entry name" value="NAT_SF"/>
    <property type="match status" value="1"/>
</dbReference>
<dbReference type="FunFam" id="3.40.630.30:FF:000078">
    <property type="entry name" value="N-alpha-acetyltransferase 50"/>
    <property type="match status" value="1"/>
</dbReference>
<dbReference type="Gene3D" id="3.40.630.30">
    <property type="match status" value="1"/>
</dbReference>
<dbReference type="InterPro" id="IPR016181">
    <property type="entry name" value="Acyl_CoA_acyltransferase"/>
</dbReference>
<dbReference type="InterPro" id="IPR000182">
    <property type="entry name" value="GNAT_dom"/>
</dbReference>
<dbReference type="InterPro" id="IPR051556">
    <property type="entry name" value="N-term/lysine_N-AcTrnsfr"/>
</dbReference>
<dbReference type="PANTHER" id="PTHR42919">
    <property type="entry name" value="N-ALPHA-ACETYLTRANSFERASE"/>
    <property type="match status" value="1"/>
</dbReference>
<dbReference type="PANTHER" id="PTHR42919:SF8">
    <property type="entry name" value="N-ALPHA-ACETYLTRANSFERASE 50"/>
    <property type="match status" value="1"/>
</dbReference>
<dbReference type="Pfam" id="PF00583">
    <property type="entry name" value="Acetyltransf_1"/>
    <property type="match status" value="1"/>
</dbReference>
<dbReference type="SUPFAM" id="SSF55729">
    <property type="entry name" value="Acyl-CoA N-acyltransferases (Nat)"/>
    <property type="match status" value="1"/>
</dbReference>
<dbReference type="PROSITE" id="PS51186">
    <property type="entry name" value="GNAT"/>
    <property type="match status" value="1"/>
</dbReference>
<sequence length="184" mass="20994">MTRSSIELGDVTPHNIKQLKKLNTVVFPVSYNDKFYVDVLEAGELAKLAYYNDIVVGAVCCRIDNTENQRRLYIMTLGCLSPYRRLGIGTVMFEHIMNFAEKDGNFDSIFLHVQINNNGAIEFYKKFGFEIVDTKEQYYKRIEPADAHVLQKTLRRTAPNSNSTATSTTANSNSRSKARQFTFV</sequence>
<gene>
    <name type="primary">san</name>
    <name type="synonym">span</name>
    <name type="ORF">CG12352</name>
</gene>
<feature type="chain" id="PRO_0000074578" description="Probable N-acetyltransferase san">
    <location>
        <begin position="1"/>
        <end position="184"/>
    </location>
</feature>
<feature type="domain" description="N-acetyltransferase" evidence="2">
    <location>
        <begin position="6"/>
        <end position="155"/>
    </location>
</feature>
<feature type="region of interest" description="Substrate" evidence="1">
    <location>
        <begin position="138"/>
        <end position="141"/>
    </location>
</feature>
<feature type="region of interest" description="Disordered" evidence="3">
    <location>
        <begin position="157"/>
        <end position="176"/>
    </location>
</feature>
<feature type="compositionally biased region" description="Low complexity" evidence="3">
    <location>
        <begin position="157"/>
        <end position="174"/>
    </location>
</feature>
<feature type="active site" evidence="1">
    <location>
        <position position="73"/>
    </location>
</feature>
<feature type="active site" evidence="1">
    <location>
        <position position="112"/>
    </location>
</feature>
<feature type="binding site" evidence="1">
    <location>
        <position position="31"/>
    </location>
    <ligand>
        <name>substrate</name>
    </ligand>
</feature>
<feature type="binding site" evidence="1">
    <location>
        <position position="75"/>
    </location>
    <ligand>
        <name>substrate</name>
    </ligand>
</feature>
<feature type="binding site" evidence="1">
    <location>
        <begin position="77"/>
        <end position="90"/>
    </location>
    <ligand>
        <name>acetyl-CoA</name>
        <dbReference type="ChEBI" id="CHEBI:57288"/>
    </ligand>
</feature>
<feature type="binding site" evidence="1">
    <location>
        <begin position="117"/>
        <end position="126"/>
    </location>
    <ligand>
        <name>CoA</name>
        <dbReference type="ChEBI" id="CHEBI:57287"/>
    </ligand>
</feature>
<feature type="modified residue" description="N6-acetyllysine; by autocatalysis" evidence="12">
    <location>
        <position position="47"/>
    </location>
</feature>
<feature type="mutagenesis site" description="Abolishes N-alpha-acetyltransferase activity; impaired sister chromatid cohesion during mitosis.; when associated with F-124." evidence="8">
    <original>R</original>
    <variation>A</variation>
    <location>
        <position position="84"/>
    </location>
</feature>
<feature type="mutagenesis site" description="Abolishes N-alpha-acetyltransferase activity; impaired sister chromatid cohesion during mitosis.; when associated with A-84." evidence="8">
    <original>Y</original>
    <variation>F</variation>
    <location>
        <position position="124"/>
    </location>
</feature>
<reference key="1">
    <citation type="journal article" date="2003" name="Curr. Biol.">
        <title>Two putative acetyltransferases, san and deco, are required for establishing sister chromatid cohesion in Drosophila.</title>
        <authorList>
            <person name="Williams B.C."/>
            <person name="Garrett-Engele C.M."/>
            <person name="Li Z."/>
            <person name="Williams E.V."/>
            <person name="Rosenman E.D."/>
            <person name="Goldberg M.L."/>
        </authorList>
    </citation>
    <scope>NUCLEOTIDE SEQUENCE [MRNA]</scope>
    <scope>FUNCTION</scope>
    <scope>SUBCELLULAR LOCATION</scope>
    <scope>IDENTIFICATION IN A COMPLEX WITH ARD1 AND NAT1</scope>
    <scope>ACETYLATION AT LYS-47</scope>
    <scope>DISRUPTION PHENOTYPE</scope>
</reference>
<reference key="2">
    <citation type="journal article" date="2000" name="Science">
        <title>The genome sequence of Drosophila melanogaster.</title>
        <authorList>
            <person name="Adams M.D."/>
            <person name="Celniker S.E."/>
            <person name="Holt R.A."/>
            <person name="Evans C.A."/>
            <person name="Gocayne J.D."/>
            <person name="Amanatides P.G."/>
            <person name="Scherer S.E."/>
            <person name="Li P.W."/>
            <person name="Hoskins R.A."/>
            <person name="Galle R.F."/>
            <person name="George R.A."/>
            <person name="Lewis S.E."/>
            <person name="Richards S."/>
            <person name="Ashburner M."/>
            <person name="Henderson S.N."/>
            <person name="Sutton G.G."/>
            <person name="Wortman J.R."/>
            <person name="Yandell M.D."/>
            <person name="Zhang Q."/>
            <person name="Chen L.X."/>
            <person name="Brandon R.C."/>
            <person name="Rogers Y.-H.C."/>
            <person name="Blazej R.G."/>
            <person name="Champe M."/>
            <person name="Pfeiffer B.D."/>
            <person name="Wan K.H."/>
            <person name="Doyle C."/>
            <person name="Baxter E.G."/>
            <person name="Helt G."/>
            <person name="Nelson C.R."/>
            <person name="Miklos G.L.G."/>
            <person name="Abril J.F."/>
            <person name="Agbayani A."/>
            <person name="An H.-J."/>
            <person name="Andrews-Pfannkoch C."/>
            <person name="Baldwin D."/>
            <person name="Ballew R.M."/>
            <person name="Basu A."/>
            <person name="Baxendale J."/>
            <person name="Bayraktaroglu L."/>
            <person name="Beasley E.M."/>
            <person name="Beeson K.Y."/>
            <person name="Benos P.V."/>
            <person name="Berman B.P."/>
            <person name="Bhandari D."/>
            <person name="Bolshakov S."/>
            <person name="Borkova D."/>
            <person name="Botchan M.R."/>
            <person name="Bouck J."/>
            <person name="Brokstein P."/>
            <person name="Brottier P."/>
            <person name="Burtis K.C."/>
            <person name="Busam D.A."/>
            <person name="Butler H."/>
            <person name="Cadieu E."/>
            <person name="Center A."/>
            <person name="Chandra I."/>
            <person name="Cherry J.M."/>
            <person name="Cawley S."/>
            <person name="Dahlke C."/>
            <person name="Davenport L.B."/>
            <person name="Davies P."/>
            <person name="de Pablos B."/>
            <person name="Delcher A."/>
            <person name="Deng Z."/>
            <person name="Mays A.D."/>
            <person name="Dew I."/>
            <person name="Dietz S.M."/>
            <person name="Dodson K."/>
            <person name="Doup L.E."/>
            <person name="Downes M."/>
            <person name="Dugan-Rocha S."/>
            <person name="Dunkov B.C."/>
            <person name="Dunn P."/>
            <person name="Durbin K.J."/>
            <person name="Evangelista C.C."/>
            <person name="Ferraz C."/>
            <person name="Ferriera S."/>
            <person name="Fleischmann W."/>
            <person name="Fosler C."/>
            <person name="Gabrielian A.E."/>
            <person name="Garg N.S."/>
            <person name="Gelbart W.M."/>
            <person name="Glasser K."/>
            <person name="Glodek A."/>
            <person name="Gong F."/>
            <person name="Gorrell J.H."/>
            <person name="Gu Z."/>
            <person name="Guan P."/>
            <person name="Harris M."/>
            <person name="Harris N.L."/>
            <person name="Harvey D.A."/>
            <person name="Heiman T.J."/>
            <person name="Hernandez J.R."/>
            <person name="Houck J."/>
            <person name="Hostin D."/>
            <person name="Houston K.A."/>
            <person name="Howland T.J."/>
            <person name="Wei M.-H."/>
            <person name="Ibegwam C."/>
            <person name="Jalali M."/>
            <person name="Kalush F."/>
            <person name="Karpen G.H."/>
            <person name="Ke Z."/>
            <person name="Kennison J.A."/>
            <person name="Ketchum K.A."/>
            <person name="Kimmel B.E."/>
            <person name="Kodira C.D."/>
            <person name="Kraft C.L."/>
            <person name="Kravitz S."/>
            <person name="Kulp D."/>
            <person name="Lai Z."/>
            <person name="Lasko P."/>
            <person name="Lei Y."/>
            <person name="Levitsky A.A."/>
            <person name="Li J.H."/>
            <person name="Li Z."/>
            <person name="Liang Y."/>
            <person name="Lin X."/>
            <person name="Liu X."/>
            <person name="Mattei B."/>
            <person name="McIntosh T.C."/>
            <person name="McLeod M.P."/>
            <person name="McPherson D."/>
            <person name="Merkulov G."/>
            <person name="Milshina N.V."/>
            <person name="Mobarry C."/>
            <person name="Morris J."/>
            <person name="Moshrefi A."/>
            <person name="Mount S.M."/>
            <person name="Moy M."/>
            <person name="Murphy B."/>
            <person name="Murphy L."/>
            <person name="Muzny D.M."/>
            <person name="Nelson D.L."/>
            <person name="Nelson D.R."/>
            <person name="Nelson K.A."/>
            <person name="Nixon K."/>
            <person name="Nusskern D.R."/>
            <person name="Pacleb J.M."/>
            <person name="Palazzolo M."/>
            <person name="Pittman G.S."/>
            <person name="Pan S."/>
            <person name="Pollard J."/>
            <person name="Puri V."/>
            <person name="Reese M.G."/>
            <person name="Reinert K."/>
            <person name="Remington K."/>
            <person name="Saunders R.D.C."/>
            <person name="Scheeler F."/>
            <person name="Shen H."/>
            <person name="Shue B.C."/>
            <person name="Siden-Kiamos I."/>
            <person name="Simpson M."/>
            <person name="Skupski M.P."/>
            <person name="Smith T.J."/>
            <person name="Spier E."/>
            <person name="Spradling A.C."/>
            <person name="Stapleton M."/>
            <person name="Strong R."/>
            <person name="Sun E."/>
            <person name="Svirskas R."/>
            <person name="Tector C."/>
            <person name="Turner R."/>
            <person name="Venter E."/>
            <person name="Wang A.H."/>
            <person name="Wang X."/>
            <person name="Wang Z.-Y."/>
            <person name="Wassarman D.A."/>
            <person name="Weinstock G.M."/>
            <person name="Weissenbach J."/>
            <person name="Williams S.M."/>
            <person name="Woodage T."/>
            <person name="Worley K.C."/>
            <person name="Wu D."/>
            <person name="Yang S."/>
            <person name="Yao Q.A."/>
            <person name="Ye J."/>
            <person name="Yeh R.-F."/>
            <person name="Zaveri J.S."/>
            <person name="Zhan M."/>
            <person name="Zhang G."/>
            <person name="Zhao Q."/>
            <person name="Zheng L."/>
            <person name="Zheng X.H."/>
            <person name="Zhong F.N."/>
            <person name="Zhong W."/>
            <person name="Zhou X."/>
            <person name="Zhu S.C."/>
            <person name="Zhu X."/>
            <person name="Smith H.O."/>
            <person name="Gibbs R.A."/>
            <person name="Myers E.W."/>
            <person name="Rubin G.M."/>
            <person name="Venter J.C."/>
        </authorList>
    </citation>
    <scope>NUCLEOTIDE SEQUENCE [LARGE SCALE GENOMIC DNA]</scope>
    <source>
        <strain>Berkeley</strain>
    </source>
</reference>
<reference key="3">
    <citation type="journal article" date="2002" name="Genome Biol.">
        <title>Annotation of the Drosophila melanogaster euchromatic genome: a systematic review.</title>
        <authorList>
            <person name="Misra S."/>
            <person name="Crosby M.A."/>
            <person name="Mungall C.J."/>
            <person name="Matthews B.B."/>
            <person name="Campbell K.S."/>
            <person name="Hradecky P."/>
            <person name="Huang Y."/>
            <person name="Kaminker J.S."/>
            <person name="Millburn G.H."/>
            <person name="Prochnik S.E."/>
            <person name="Smith C.D."/>
            <person name="Tupy J.L."/>
            <person name="Whitfield E.J."/>
            <person name="Bayraktaroglu L."/>
            <person name="Berman B.P."/>
            <person name="Bettencourt B.R."/>
            <person name="Celniker S.E."/>
            <person name="de Grey A.D.N.J."/>
            <person name="Drysdale R.A."/>
            <person name="Harris N.L."/>
            <person name="Richter J."/>
            <person name="Russo S."/>
            <person name="Schroeder A.J."/>
            <person name="Shu S.Q."/>
            <person name="Stapleton M."/>
            <person name="Yamada C."/>
            <person name="Ashburner M."/>
            <person name="Gelbart W.M."/>
            <person name="Rubin G.M."/>
            <person name="Lewis S.E."/>
        </authorList>
    </citation>
    <scope>GENOME REANNOTATION</scope>
    <source>
        <strain>Berkeley</strain>
    </source>
</reference>
<reference key="4">
    <citation type="journal article" date="2002" name="Genome Biol.">
        <title>A Drosophila full-length cDNA resource.</title>
        <authorList>
            <person name="Stapleton M."/>
            <person name="Carlson J.W."/>
            <person name="Brokstein P."/>
            <person name="Yu C."/>
            <person name="Champe M."/>
            <person name="George R.A."/>
            <person name="Guarin H."/>
            <person name="Kronmiller B."/>
            <person name="Pacleb J.M."/>
            <person name="Park S."/>
            <person name="Wan K.H."/>
            <person name="Rubin G.M."/>
            <person name="Celniker S.E."/>
        </authorList>
    </citation>
    <scope>NUCLEOTIDE SEQUENCE [LARGE SCALE MRNA]</scope>
    <source>
        <strain>Berkeley</strain>
        <tissue>Testis</tissue>
    </source>
</reference>
<reference key="5">
    <citation type="journal article" date="2008" name="Dev. Biol.">
        <title>Differential requirements of a mitotic acetyltransferase in somatic and germ line cells.</title>
        <authorList>
            <person name="Pimenta-Marques A."/>
            <person name="Tostoes R."/>
            <person name="Marty T."/>
            <person name="Barbosa V."/>
            <person name="Lehmann R."/>
            <person name="Martinho R.G."/>
        </authorList>
    </citation>
    <scope>FUNCTION</scope>
    <scope>DISRUPTION PHENOTYPE</scope>
</reference>
<reference key="6">
    <citation type="journal article" date="2012" name="Infect. Immun.">
        <title>Identification of critical host mitochondrion-associated genes during Ehrlichia chaffeensis infections.</title>
        <authorList>
            <person name="Von Ohlen T."/>
            <person name="Luce-Fedrow A."/>
            <person name="Ortega M.T."/>
            <person name="Ganta R.R."/>
            <person name="Chapes S.K."/>
        </authorList>
    </citation>
    <scope>FUNCTION (MICROBIAL INFECTION)</scope>
    <scope>DISRUPTION PHENOTYPE (MICROBIAL INFECTION)</scope>
</reference>
<reference key="7">
    <citation type="journal article" date="2013" name="Int. J. Med. Microbiol.">
        <title>Ehrlichia chaffeensis replication sites in adult Drosophila melanogaster.</title>
        <authorList>
            <person name="Drolia R."/>
            <person name="Von Ohlen T."/>
            <person name="Chapes S.K."/>
        </authorList>
    </citation>
    <scope>FUNCTION (MICROBIAL INFECTION)</scope>
    <scope>DISRUPTION PHENOTYPE (MICROBIAL INFECTION)</scope>
</reference>
<reference key="8">
    <citation type="journal article" date="2016" name="Sci. Rep.">
        <title>Naa50/San-dependent N-terminal acetylation of Scc1 is potentially important for sister chromatid cohesion.</title>
        <authorList>
            <person name="Ribeiro A.L."/>
            <person name="Silva R.D."/>
            <person name="Foyn H."/>
            <person name="Tiago M.N."/>
            <person name="Rathore O.S."/>
            <person name="Arnesen T."/>
            <person name="Martinho R.G."/>
        </authorList>
    </citation>
    <scope>FUNCTION</scope>
    <scope>MUTAGENESIS OF ARG-84 AND TYR-124</scope>
</reference>
<keyword id="KW-0007">Acetylation</keyword>
<keyword id="KW-0012">Acyltransferase</keyword>
<keyword id="KW-0131">Cell cycle</keyword>
<keyword id="KW-0963">Cytoplasm</keyword>
<keyword id="KW-1185">Reference proteome</keyword>
<keyword id="KW-0808">Transferase</keyword>
<name>SAN_DROME</name>
<protein>
    <recommendedName>
        <fullName>Probable N-acetyltransferase san</fullName>
        <ecNumber evidence="1">2.3.1.258</ecNumber>
    </recommendedName>
    <alternativeName>
        <fullName>N-epsilon-acetyltransferase san</fullName>
        <ecNumber evidence="12">2.3.1.-</ecNumber>
    </alternativeName>
    <alternativeName>
        <fullName evidence="10">Protein atado</fullName>
    </alternativeName>
    <alternativeName>
        <fullName evidence="9">Protein separation anxiety</fullName>
    </alternativeName>
</protein>
<organism>
    <name type="scientific">Drosophila melanogaster</name>
    <name type="common">Fruit fly</name>
    <dbReference type="NCBI Taxonomy" id="7227"/>
    <lineage>
        <taxon>Eukaryota</taxon>
        <taxon>Metazoa</taxon>
        <taxon>Ecdysozoa</taxon>
        <taxon>Arthropoda</taxon>
        <taxon>Hexapoda</taxon>
        <taxon>Insecta</taxon>
        <taxon>Pterygota</taxon>
        <taxon>Neoptera</taxon>
        <taxon>Endopterygota</taxon>
        <taxon>Diptera</taxon>
        <taxon>Brachycera</taxon>
        <taxon>Muscomorpha</taxon>
        <taxon>Ephydroidea</taxon>
        <taxon>Drosophilidae</taxon>
        <taxon>Drosophila</taxon>
        <taxon>Sophophora</taxon>
    </lineage>
</organism>
<evidence type="ECO:0000250" key="1">
    <source>
        <dbReference type="UniProtKB" id="Q9GZZ1"/>
    </source>
</evidence>
<evidence type="ECO:0000255" key="2">
    <source>
        <dbReference type="PROSITE-ProRule" id="PRU00532"/>
    </source>
</evidence>
<evidence type="ECO:0000256" key="3">
    <source>
        <dbReference type="SAM" id="MobiDB-lite"/>
    </source>
</evidence>
<evidence type="ECO:0000269" key="4">
    <source>
    </source>
</evidence>
<evidence type="ECO:0000269" key="5">
    <source>
    </source>
</evidence>
<evidence type="ECO:0000269" key="6">
    <source>
    </source>
</evidence>
<evidence type="ECO:0000269" key="7">
    <source>
    </source>
</evidence>
<evidence type="ECO:0000269" key="8">
    <source>
    </source>
</evidence>
<evidence type="ECO:0000303" key="9">
    <source>
    </source>
</evidence>
<evidence type="ECO:0000303" key="10">
    <source>
    </source>
</evidence>
<evidence type="ECO:0000305" key="11"/>
<evidence type="ECO:0000305" key="12">
    <source>
    </source>
</evidence>
<proteinExistence type="evidence at protein level"/>
<accession>Q9NHD5</accession>